<reference key="1">
    <citation type="submission" date="2006-03" db="EMBL/GenBank/DDBJ databases">
        <title>Complete sequence of chromosome of Psychrobacter cryohalolentis K5.</title>
        <authorList>
            <consortium name="US DOE Joint Genome Institute"/>
            <person name="Copeland A."/>
            <person name="Lucas S."/>
            <person name="Lapidus A."/>
            <person name="Barry K."/>
            <person name="Detter J.C."/>
            <person name="Glavina T."/>
            <person name="Hammon N."/>
            <person name="Israni S."/>
            <person name="Dalin E."/>
            <person name="Tice H."/>
            <person name="Pitluck S."/>
            <person name="Brettin T."/>
            <person name="Bruce D."/>
            <person name="Han C."/>
            <person name="Tapia R."/>
            <person name="Sims D.R."/>
            <person name="Gilna P."/>
            <person name="Schmutz J."/>
            <person name="Larimer F."/>
            <person name="Land M."/>
            <person name="Hauser L."/>
            <person name="Kyrpides N."/>
            <person name="Kim E."/>
            <person name="Richardson P."/>
        </authorList>
    </citation>
    <scope>NUCLEOTIDE SEQUENCE [LARGE SCALE GENOMIC DNA]</scope>
    <source>
        <strain>ATCC BAA-1226 / DSM 17306 / VKM B-2378 / K5</strain>
    </source>
</reference>
<evidence type="ECO:0000255" key="1">
    <source>
        <dbReference type="HAMAP-Rule" id="MF_00051"/>
    </source>
</evidence>
<comment type="function">
    <text evidence="1">Catalyzes the reversible interconversion of serine and glycine with tetrahydrofolate (THF) serving as the one-carbon carrier. This reaction serves as the major source of one-carbon groups required for the biosynthesis of purines, thymidylate, methionine, and other important biomolecules. Also exhibits THF-independent aldolase activity toward beta-hydroxyamino acids, producing glycine and aldehydes, via a retro-aldol mechanism.</text>
</comment>
<comment type="catalytic activity">
    <reaction evidence="1">
        <text>(6R)-5,10-methylene-5,6,7,8-tetrahydrofolate + glycine + H2O = (6S)-5,6,7,8-tetrahydrofolate + L-serine</text>
        <dbReference type="Rhea" id="RHEA:15481"/>
        <dbReference type="ChEBI" id="CHEBI:15377"/>
        <dbReference type="ChEBI" id="CHEBI:15636"/>
        <dbReference type="ChEBI" id="CHEBI:33384"/>
        <dbReference type="ChEBI" id="CHEBI:57305"/>
        <dbReference type="ChEBI" id="CHEBI:57453"/>
        <dbReference type="EC" id="2.1.2.1"/>
    </reaction>
</comment>
<comment type="cofactor">
    <cofactor evidence="1">
        <name>pyridoxal 5'-phosphate</name>
        <dbReference type="ChEBI" id="CHEBI:597326"/>
    </cofactor>
</comment>
<comment type="pathway">
    <text evidence="1">One-carbon metabolism; tetrahydrofolate interconversion.</text>
</comment>
<comment type="pathway">
    <text evidence="1">Amino-acid biosynthesis; glycine biosynthesis; glycine from L-serine: step 1/1.</text>
</comment>
<comment type="subunit">
    <text evidence="1">Homodimer.</text>
</comment>
<comment type="subcellular location">
    <subcellularLocation>
        <location evidence="1">Cytoplasm</location>
    </subcellularLocation>
</comment>
<comment type="similarity">
    <text evidence="1">Belongs to the SHMT family.</text>
</comment>
<proteinExistence type="inferred from homology"/>
<organism>
    <name type="scientific">Psychrobacter cryohalolentis (strain ATCC BAA-1226 / DSM 17306 / VKM B-2378 / K5)</name>
    <dbReference type="NCBI Taxonomy" id="335284"/>
    <lineage>
        <taxon>Bacteria</taxon>
        <taxon>Pseudomonadati</taxon>
        <taxon>Pseudomonadota</taxon>
        <taxon>Gammaproteobacteria</taxon>
        <taxon>Moraxellales</taxon>
        <taxon>Moraxellaceae</taxon>
        <taxon>Psychrobacter</taxon>
    </lineage>
</organism>
<protein>
    <recommendedName>
        <fullName evidence="1">Serine hydroxymethyltransferase</fullName>
        <shortName evidence="1">SHMT</shortName>
        <shortName evidence="1">Serine methylase</shortName>
        <ecNumber evidence="1">2.1.2.1</ecNumber>
    </recommendedName>
</protein>
<accession>Q1QE01</accession>
<sequence>MFKDISIKDFDPVLAEAMAAESVRQENHIELIASENYCSQAVMEAQGTDLTNKYAEGYPGKRYYGGCEHVDVVEQLAIDRAKELFGAEYVNVQPHSGSQANSAVFLALLEANDTVLGMSLDAGGHLTHGAHINFSGLNYNAVQYGLVEGTGLIDYDQVESLAKEHKPKMIIAGFSAYSQVVDWARFREIADEVGAYLLVDMAHVAGLIAGGVYPSPVPFADVVTTTTHKTLRGPRSGMILARDEVLAKKLNSAVFPGNQGGPLMHVIAAKAVCFKEALEENFKTYQQQVVKNAQAMAKVIQDRGYEIISGGTENHLMLISLVKQEMTGKEADKWLGDAHITVNKNAVPNDPKSPFVTSGIRIGTPAITTRGFNEAQAGDLAGWICDVLDSRGDEAVTAEVRGKVEAICKELPVYAKNQ</sequence>
<feature type="chain" id="PRO_1000006300" description="Serine hydroxymethyltransferase">
    <location>
        <begin position="1"/>
        <end position="418"/>
    </location>
</feature>
<feature type="binding site" evidence="1">
    <location>
        <position position="120"/>
    </location>
    <ligand>
        <name>(6S)-5,6,7,8-tetrahydrofolate</name>
        <dbReference type="ChEBI" id="CHEBI:57453"/>
    </ligand>
</feature>
<feature type="binding site" evidence="1">
    <location>
        <begin position="124"/>
        <end position="126"/>
    </location>
    <ligand>
        <name>(6S)-5,6,7,8-tetrahydrofolate</name>
        <dbReference type="ChEBI" id="CHEBI:57453"/>
    </ligand>
</feature>
<feature type="binding site" evidence="1">
    <location>
        <begin position="353"/>
        <end position="355"/>
    </location>
    <ligand>
        <name>(6S)-5,6,7,8-tetrahydrofolate</name>
        <dbReference type="ChEBI" id="CHEBI:57453"/>
    </ligand>
</feature>
<feature type="site" description="Plays an important role in substrate specificity" evidence="1">
    <location>
        <position position="228"/>
    </location>
</feature>
<feature type="modified residue" description="N6-(pyridoxal phosphate)lysine" evidence="1">
    <location>
        <position position="229"/>
    </location>
</feature>
<name>GLYA_PSYCK</name>
<gene>
    <name evidence="1" type="primary">glyA</name>
    <name type="ordered locus">Pcryo_0318</name>
</gene>
<dbReference type="EC" id="2.1.2.1" evidence="1"/>
<dbReference type="EMBL" id="CP000323">
    <property type="protein sequence ID" value="ABE74102.1"/>
    <property type="molecule type" value="Genomic_DNA"/>
</dbReference>
<dbReference type="RefSeq" id="WP_011512688.1">
    <property type="nucleotide sequence ID" value="NC_007969.1"/>
</dbReference>
<dbReference type="SMR" id="Q1QE01"/>
<dbReference type="STRING" id="335284.Pcryo_0318"/>
<dbReference type="KEGG" id="pcr:Pcryo_0318"/>
<dbReference type="eggNOG" id="COG0112">
    <property type="taxonomic scope" value="Bacteria"/>
</dbReference>
<dbReference type="HOGENOM" id="CLU_022477_2_1_6"/>
<dbReference type="UniPathway" id="UPA00193"/>
<dbReference type="UniPathway" id="UPA00288">
    <property type="reaction ID" value="UER01023"/>
</dbReference>
<dbReference type="Proteomes" id="UP000002425">
    <property type="component" value="Chromosome"/>
</dbReference>
<dbReference type="GO" id="GO:0005829">
    <property type="term" value="C:cytosol"/>
    <property type="evidence" value="ECO:0007669"/>
    <property type="project" value="TreeGrafter"/>
</dbReference>
<dbReference type="GO" id="GO:0004372">
    <property type="term" value="F:glycine hydroxymethyltransferase activity"/>
    <property type="evidence" value="ECO:0007669"/>
    <property type="project" value="UniProtKB-UniRule"/>
</dbReference>
<dbReference type="GO" id="GO:0030170">
    <property type="term" value="F:pyridoxal phosphate binding"/>
    <property type="evidence" value="ECO:0007669"/>
    <property type="project" value="UniProtKB-UniRule"/>
</dbReference>
<dbReference type="GO" id="GO:0019264">
    <property type="term" value="P:glycine biosynthetic process from serine"/>
    <property type="evidence" value="ECO:0007669"/>
    <property type="project" value="UniProtKB-UniRule"/>
</dbReference>
<dbReference type="GO" id="GO:0035999">
    <property type="term" value="P:tetrahydrofolate interconversion"/>
    <property type="evidence" value="ECO:0007669"/>
    <property type="project" value="UniProtKB-UniRule"/>
</dbReference>
<dbReference type="CDD" id="cd00378">
    <property type="entry name" value="SHMT"/>
    <property type="match status" value="1"/>
</dbReference>
<dbReference type="FunFam" id="3.40.640.10:FF:000001">
    <property type="entry name" value="Serine hydroxymethyltransferase"/>
    <property type="match status" value="1"/>
</dbReference>
<dbReference type="FunFam" id="3.90.1150.10:FF:000003">
    <property type="entry name" value="Serine hydroxymethyltransferase"/>
    <property type="match status" value="1"/>
</dbReference>
<dbReference type="Gene3D" id="3.90.1150.10">
    <property type="entry name" value="Aspartate Aminotransferase, domain 1"/>
    <property type="match status" value="1"/>
</dbReference>
<dbReference type="Gene3D" id="3.40.640.10">
    <property type="entry name" value="Type I PLP-dependent aspartate aminotransferase-like (Major domain)"/>
    <property type="match status" value="1"/>
</dbReference>
<dbReference type="HAMAP" id="MF_00051">
    <property type="entry name" value="SHMT"/>
    <property type="match status" value="1"/>
</dbReference>
<dbReference type="InterPro" id="IPR015424">
    <property type="entry name" value="PyrdxlP-dep_Trfase"/>
</dbReference>
<dbReference type="InterPro" id="IPR015421">
    <property type="entry name" value="PyrdxlP-dep_Trfase_major"/>
</dbReference>
<dbReference type="InterPro" id="IPR015422">
    <property type="entry name" value="PyrdxlP-dep_Trfase_small"/>
</dbReference>
<dbReference type="InterPro" id="IPR001085">
    <property type="entry name" value="Ser_HO-MeTrfase"/>
</dbReference>
<dbReference type="InterPro" id="IPR049943">
    <property type="entry name" value="Ser_HO-MeTrfase-like"/>
</dbReference>
<dbReference type="InterPro" id="IPR019798">
    <property type="entry name" value="Ser_HO-MeTrfase_PLP_BS"/>
</dbReference>
<dbReference type="InterPro" id="IPR039429">
    <property type="entry name" value="SHMT-like_dom"/>
</dbReference>
<dbReference type="NCBIfam" id="NF000586">
    <property type="entry name" value="PRK00011.1"/>
    <property type="match status" value="1"/>
</dbReference>
<dbReference type="PANTHER" id="PTHR11680">
    <property type="entry name" value="SERINE HYDROXYMETHYLTRANSFERASE"/>
    <property type="match status" value="1"/>
</dbReference>
<dbReference type="PANTHER" id="PTHR11680:SF50">
    <property type="entry name" value="SERINE HYDROXYMETHYLTRANSFERASE"/>
    <property type="match status" value="1"/>
</dbReference>
<dbReference type="Pfam" id="PF00464">
    <property type="entry name" value="SHMT"/>
    <property type="match status" value="1"/>
</dbReference>
<dbReference type="PIRSF" id="PIRSF000412">
    <property type="entry name" value="SHMT"/>
    <property type="match status" value="1"/>
</dbReference>
<dbReference type="SUPFAM" id="SSF53383">
    <property type="entry name" value="PLP-dependent transferases"/>
    <property type="match status" value="1"/>
</dbReference>
<dbReference type="PROSITE" id="PS00096">
    <property type="entry name" value="SHMT"/>
    <property type="match status" value="1"/>
</dbReference>
<keyword id="KW-0028">Amino-acid biosynthesis</keyword>
<keyword id="KW-0963">Cytoplasm</keyword>
<keyword id="KW-0554">One-carbon metabolism</keyword>
<keyword id="KW-0663">Pyridoxal phosphate</keyword>
<keyword id="KW-0808">Transferase</keyword>